<keyword id="KW-1015">Disulfide bond</keyword>
<keyword id="KW-0676">Redox-active center</keyword>
<keyword id="KW-1185">Reference proteome</keyword>
<keyword id="KW-0732">Signal</keyword>
<accession>Q9STZ2</accession>
<accession>Q67ZS9</accession>
<accession>Q6NQE9</accession>
<gene>
    <name type="ordered locus">At3g47300</name>
    <name type="ORF">T21L8.50</name>
</gene>
<organism>
    <name type="scientific">Arabidopsis thaliana</name>
    <name type="common">Mouse-ear cress</name>
    <dbReference type="NCBI Taxonomy" id="3702"/>
    <lineage>
        <taxon>Eukaryota</taxon>
        <taxon>Viridiplantae</taxon>
        <taxon>Streptophyta</taxon>
        <taxon>Embryophyta</taxon>
        <taxon>Tracheophyta</taxon>
        <taxon>Spermatophyta</taxon>
        <taxon>Magnoliopsida</taxon>
        <taxon>eudicotyledons</taxon>
        <taxon>Gunneridae</taxon>
        <taxon>Pentapetalae</taxon>
        <taxon>rosids</taxon>
        <taxon>malvids</taxon>
        <taxon>Brassicales</taxon>
        <taxon>Brassicaceae</taxon>
        <taxon>Camelineae</taxon>
        <taxon>Arabidopsis</taxon>
    </lineage>
</organism>
<dbReference type="EMBL" id="AL096860">
    <property type="protein sequence ID" value="CAB51202.1"/>
    <property type="status" value="ALT_SEQ"/>
    <property type="molecule type" value="Genomic_DNA"/>
</dbReference>
<dbReference type="EMBL" id="CP002686">
    <property type="protein sequence ID" value="AEE78263.1"/>
    <property type="molecule type" value="Genomic_DNA"/>
</dbReference>
<dbReference type="EMBL" id="BT010507">
    <property type="protein sequence ID" value="AAQ65130.1"/>
    <property type="molecule type" value="mRNA"/>
</dbReference>
<dbReference type="EMBL" id="AK175455">
    <property type="protein sequence ID" value="BAD43218.1"/>
    <property type="molecule type" value="mRNA"/>
</dbReference>
<dbReference type="EMBL" id="AK176038">
    <property type="protein sequence ID" value="BAD43801.1"/>
    <property type="molecule type" value="mRNA"/>
</dbReference>
<dbReference type="EMBL" id="AK176362">
    <property type="protein sequence ID" value="BAD44125.1"/>
    <property type="molecule type" value="mRNA"/>
</dbReference>
<dbReference type="PIR" id="T12985">
    <property type="entry name" value="T12985"/>
</dbReference>
<dbReference type="BioGRID" id="9204">
    <property type="interactions" value="1"/>
</dbReference>
<dbReference type="FunCoup" id="Q9STZ2">
    <property type="interactions" value="1892"/>
</dbReference>
<dbReference type="STRING" id="3702.Q9STZ2"/>
<dbReference type="PaxDb" id="3702-AT3G47300.1"/>
<dbReference type="ProteomicsDB" id="234482"/>
<dbReference type="EnsemblPlants" id="AT3G47300.1">
    <property type="protein sequence ID" value="AT3G47300.1"/>
    <property type="gene ID" value="AT3G47300"/>
</dbReference>
<dbReference type="Gramene" id="AT3G47300.1">
    <property type="protein sequence ID" value="AT3G47300.1"/>
    <property type="gene ID" value="AT3G47300"/>
</dbReference>
<dbReference type="KEGG" id="ath:AT3G47300"/>
<dbReference type="Araport" id="AT3G47300"/>
<dbReference type="TAIR" id="AT3G47300">
    <property type="gene designation" value="SELT"/>
</dbReference>
<dbReference type="eggNOG" id="KOG3286">
    <property type="taxonomic scope" value="Eukaryota"/>
</dbReference>
<dbReference type="HOGENOM" id="CLU_073701_0_0_1"/>
<dbReference type="InParanoid" id="Q9STZ2"/>
<dbReference type="OMA" id="FQIIDFH"/>
<dbReference type="PhylomeDB" id="Q9STZ2"/>
<dbReference type="PRO" id="PR:Q9STZ2"/>
<dbReference type="Proteomes" id="UP000006548">
    <property type="component" value="Chromosome 3"/>
</dbReference>
<dbReference type="ExpressionAtlas" id="Q9STZ2">
    <property type="expression patterns" value="baseline and differential"/>
</dbReference>
<dbReference type="Gene3D" id="3.40.30.10">
    <property type="entry name" value="Glutaredoxin"/>
    <property type="match status" value="1"/>
</dbReference>
<dbReference type="InterPro" id="IPR011893">
    <property type="entry name" value="Selenoprotein_Rdx-typ"/>
</dbReference>
<dbReference type="InterPro" id="IPR019389">
    <property type="entry name" value="Selenoprotein_T"/>
</dbReference>
<dbReference type="InterPro" id="IPR036249">
    <property type="entry name" value="Thioredoxin-like_sf"/>
</dbReference>
<dbReference type="NCBIfam" id="TIGR02174">
    <property type="entry name" value="CXXU_selWTH"/>
    <property type="match status" value="1"/>
</dbReference>
<dbReference type="PANTHER" id="PTHR13544">
    <property type="entry name" value="SELENOPROTEIN T"/>
    <property type="match status" value="1"/>
</dbReference>
<dbReference type="PANTHER" id="PTHR13544:SF12">
    <property type="entry name" value="SELT-LIKE PROTEIN"/>
    <property type="match status" value="1"/>
</dbReference>
<dbReference type="Pfam" id="PF10262">
    <property type="entry name" value="Rdx"/>
    <property type="match status" value="1"/>
</dbReference>
<dbReference type="SUPFAM" id="SSF52833">
    <property type="entry name" value="Thioredoxin-like"/>
    <property type="match status" value="1"/>
</dbReference>
<comment type="similarity">
    <text evidence="2">Belongs to the SelWTH family. SELT subfamily.</text>
</comment>
<comment type="sequence caution" evidence="2">
    <conflict type="erroneous gene model prediction">
        <sequence resource="EMBL-CDS" id="CAB51202"/>
    </conflict>
</comment>
<feature type="signal peptide" evidence="1">
    <location>
        <begin position="1"/>
        <end position="22"/>
    </location>
</feature>
<feature type="chain" id="PRO_0000032292" description="SelT-like protein">
    <location>
        <begin position="23"/>
        <end position="209"/>
    </location>
</feature>
<feature type="disulfide bond" description="Redox-active" evidence="1">
    <location>
        <begin position="64"/>
        <end position="67"/>
    </location>
</feature>
<feature type="sequence conflict" description="In Ref. 4; BAD43801." evidence="2" ref="4">
    <original>I</original>
    <variation>S</variation>
    <location>
        <position position="196"/>
    </location>
</feature>
<proteinExistence type="evidence at transcript level"/>
<reference key="1">
    <citation type="journal article" date="2000" name="Nature">
        <title>Sequence and analysis of chromosome 3 of the plant Arabidopsis thaliana.</title>
        <authorList>
            <person name="Salanoubat M."/>
            <person name="Lemcke K."/>
            <person name="Rieger M."/>
            <person name="Ansorge W."/>
            <person name="Unseld M."/>
            <person name="Fartmann B."/>
            <person name="Valle G."/>
            <person name="Bloecker H."/>
            <person name="Perez-Alonso M."/>
            <person name="Obermaier B."/>
            <person name="Delseny M."/>
            <person name="Boutry M."/>
            <person name="Grivell L.A."/>
            <person name="Mache R."/>
            <person name="Puigdomenech P."/>
            <person name="De Simone V."/>
            <person name="Choisne N."/>
            <person name="Artiguenave F."/>
            <person name="Robert C."/>
            <person name="Brottier P."/>
            <person name="Wincker P."/>
            <person name="Cattolico L."/>
            <person name="Weissenbach J."/>
            <person name="Saurin W."/>
            <person name="Quetier F."/>
            <person name="Schaefer M."/>
            <person name="Mueller-Auer S."/>
            <person name="Gabel C."/>
            <person name="Fuchs M."/>
            <person name="Benes V."/>
            <person name="Wurmbach E."/>
            <person name="Drzonek H."/>
            <person name="Erfle H."/>
            <person name="Jordan N."/>
            <person name="Bangert S."/>
            <person name="Wiedelmann R."/>
            <person name="Kranz H."/>
            <person name="Voss H."/>
            <person name="Holland R."/>
            <person name="Brandt P."/>
            <person name="Nyakatura G."/>
            <person name="Vezzi A."/>
            <person name="D'Angelo M."/>
            <person name="Pallavicini A."/>
            <person name="Toppo S."/>
            <person name="Simionati B."/>
            <person name="Conrad A."/>
            <person name="Hornischer K."/>
            <person name="Kauer G."/>
            <person name="Loehnert T.-H."/>
            <person name="Nordsiek G."/>
            <person name="Reichelt J."/>
            <person name="Scharfe M."/>
            <person name="Schoen O."/>
            <person name="Bargues M."/>
            <person name="Terol J."/>
            <person name="Climent J."/>
            <person name="Navarro P."/>
            <person name="Collado C."/>
            <person name="Perez-Perez A."/>
            <person name="Ottenwaelder B."/>
            <person name="Duchemin D."/>
            <person name="Cooke R."/>
            <person name="Laudie M."/>
            <person name="Berger-Llauro C."/>
            <person name="Purnelle B."/>
            <person name="Masuy D."/>
            <person name="de Haan M."/>
            <person name="Maarse A.C."/>
            <person name="Alcaraz J.-P."/>
            <person name="Cottet A."/>
            <person name="Casacuberta E."/>
            <person name="Monfort A."/>
            <person name="Argiriou A."/>
            <person name="Flores M."/>
            <person name="Liguori R."/>
            <person name="Vitale D."/>
            <person name="Mannhaupt G."/>
            <person name="Haase D."/>
            <person name="Schoof H."/>
            <person name="Rudd S."/>
            <person name="Zaccaria P."/>
            <person name="Mewes H.-W."/>
            <person name="Mayer K.F.X."/>
            <person name="Kaul S."/>
            <person name="Town C.D."/>
            <person name="Koo H.L."/>
            <person name="Tallon L.J."/>
            <person name="Jenkins J."/>
            <person name="Rooney T."/>
            <person name="Rizzo M."/>
            <person name="Walts A."/>
            <person name="Utterback T."/>
            <person name="Fujii C.Y."/>
            <person name="Shea T.P."/>
            <person name="Creasy T.H."/>
            <person name="Haas B."/>
            <person name="Maiti R."/>
            <person name="Wu D."/>
            <person name="Peterson J."/>
            <person name="Van Aken S."/>
            <person name="Pai G."/>
            <person name="Militscher J."/>
            <person name="Sellers P."/>
            <person name="Gill J.E."/>
            <person name="Feldblyum T.V."/>
            <person name="Preuss D."/>
            <person name="Lin X."/>
            <person name="Nierman W.C."/>
            <person name="Salzberg S.L."/>
            <person name="White O."/>
            <person name="Venter J.C."/>
            <person name="Fraser C.M."/>
            <person name="Kaneko T."/>
            <person name="Nakamura Y."/>
            <person name="Sato S."/>
            <person name="Kato T."/>
            <person name="Asamizu E."/>
            <person name="Sasamoto S."/>
            <person name="Kimura T."/>
            <person name="Idesawa K."/>
            <person name="Kawashima K."/>
            <person name="Kishida Y."/>
            <person name="Kiyokawa C."/>
            <person name="Kohara M."/>
            <person name="Matsumoto M."/>
            <person name="Matsuno A."/>
            <person name="Muraki A."/>
            <person name="Nakayama S."/>
            <person name="Nakazaki N."/>
            <person name="Shinpo S."/>
            <person name="Takeuchi C."/>
            <person name="Wada T."/>
            <person name="Watanabe A."/>
            <person name="Yamada M."/>
            <person name="Yasuda M."/>
            <person name="Tabata S."/>
        </authorList>
    </citation>
    <scope>NUCLEOTIDE SEQUENCE [LARGE SCALE GENOMIC DNA]</scope>
    <source>
        <strain>cv. Columbia</strain>
    </source>
</reference>
<reference key="2">
    <citation type="journal article" date="2017" name="Plant J.">
        <title>Araport11: a complete reannotation of the Arabidopsis thaliana reference genome.</title>
        <authorList>
            <person name="Cheng C.Y."/>
            <person name="Krishnakumar V."/>
            <person name="Chan A.P."/>
            <person name="Thibaud-Nissen F."/>
            <person name="Schobel S."/>
            <person name="Town C.D."/>
        </authorList>
    </citation>
    <scope>GENOME REANNOTATION</scope>
    <source>
        <strain>cv. Columbia</strain>
    </source>
</reference>
<reference key="3">
    <citation type="journal article" date="2003" name="Science">
        <title>Empirical analysis of transcriptional activity in the Arabidopsis genome.</title>
        <authorList>
            <person name="Yamada K."/>
            <person name="Lim J."/>
            <person name="Dale J.M."/>
            <person name="Chen H."/>
            <person name="Shinn P."/>
            <person name="Palm C.J."/>
            <person name="Southwick A.M."/>
            <person name="Wu H.C."/>
            <person name="Kim C.J."/>
            <person name="Nguyen M."/>
            <person name="Pham P.K."/>
            <person name="Cheuk R.F."/>
            <person name="Karlin-Newmann G."/>
            <person name="Liu S.X."/>
            <person name="Lam B."/>
            <person name="Sakano H."/>
            <person name="Wu T."/>
            <person name="Yu G."/>
            <person name="Miranda M."/>
            <person name="Quach H.L."/>
            <person name="Tripp M."/>
            <person name="Chang C.H."/>
            <person name="Lee J.M."/>
            <person name="Toriumi M.J."/>
            <person name="Chan M.M."/>
            <person name="Tang C.C."/>
            <person name="Onodera C.S."/>
            <person name="Deng J.M."/>
            <person name="Akiyama K."/>
            <person name="Ansari Y."/>
            <person name="Arakawa T."/>
            <person name="Banh J."/>
            <person name="Banno F."/>
            <person name="Bowser L."/>
            <person name="Brooks S.Y."/>
            <person name="Carninci P."/>
            <person name="Chao Q."/>
            <person name="Choy N."/>
            <person name="Enju A."/>
            <person name="Goldsmith A.D."/>
            <person name="Gurjal M."/>
            <person name="Hansen N.F."/>
            <person name="Hayashizaki Y."/>
            <person name="Johnson-Hopson C."/>
            <person name="Hsuan V.W."/>
            <person name="Iida K."/>
            <person name="Karnes M."/>
            <person name="Khan S."/>
            <person name="Koesema E."/>
            <person name="Ishida J."/>
            <person name="Jiang P.X."/>
            <person name="Jones T."/>
            <person name="Kawai J."/>
            <person name="Kamiya A."/>
            <person name="Meyers C."/>
            <person name="Nakajima M."/>
            <person name="Narusaka M."/>
            <person name="Seki M."/>
            <person name="Sakurai T."/>
            <person name="Satou M."/>
            <person name="Tamse R."/>
            <person name="Vaysberg M."/>
            <person name="Wallender E.K."/>
            <person name="Wong C."/>
            <person name="Yamamura Y."/>
            <person name="Yuan S."/>
            <person name="Shinozaki K."/>
            <person name="Davis R.W."/>
            <person name="Theologis A."/>
            <person name="Ecker J.R."/>
        </authorList>
    </citation>
    <scope>NUCLEOTIDE SEQUENCE [LARGE SCALE MRNA]</scope>
    <source>
        <strain>cv. Columbia</strain>
    </source>
</reference>
<reference key="4">
    <citation type="submission" date="2004-09" db="EMBL/GenBank/DDBJ databases">
        <title>Large-scale analysis of RIKEN Arabidopsis full-length (RAFL) cDNAs.</title>
        <authorList>
            <person name="Totoki Y."/>
            <person name="Seki M."/>
            <person name="Ishida J."/>
            <person name="Nakajima M."/>
            <person name="Enju A."/>
            <person name="Kamiya A."/>
            <person name="Narusaka M."/>
            <person name="Shin-i T."/>
            <person name="Nakagawa M."/>
            <person name="Sakamoto N."/>
            <person name="Oishi K."/>
            <person name="Kohara Y."/>
            <person name="Kobayashi M."/>
            <person name="Toyoda A."/>
            <person name="Sakaki Y."/>
            <person name="Sakurai T."/>
            <person name="Iida K."/>
            <person name="Akiyama K."/>
            <person name="Satou M."/>
            <person name="Toyoda T."/>
            <person name="Konagaya A."/>
            <person name="Carninci P."/>
            <person name="Kawai J."/>
            <person name="Hayashizaki Y."/>
            <person name="Shinozaki K."/>
        </authorList>
    </citation>
    <scope>NUCLEOTIDE SEQUENCE [LARGE SCALE MRNA]</scope>
    <source>
        <strain>cv. Columbia</strain>
    </source>
</reference>
<protein>
    <recommendedName>
        <fullName>SelT-like protein</fullName>
    </recommendedName>
</protein>
<sequence>MDKTQLILLGLPIFLLCSDLFNLFTPPPPKSQHQSPPSISETLDFPAQKSTGVGYGNTVEINFCISCSYKGTAVSMKKMLESVFPGLDVVLANYPAPAPKRILAKVVPVAQVGVIGLIMGGEQIFPMIGIAQPPAWYHSLRANRFGSMASTWLLGNFLQSFLQSSGAFEVSCNGELVFSKLKEGRFPGEIELRDLISGTMTKPFVTGSY</sequence>
<name>SELT_ARATH</name>
<evidence type="ECO:0000255" key="1"/>
<evidence type="ECO:0000305" key="2"/>